<protein>
    <recommendedName>
        <fullName evidence="1">Serine--tRNA ligase</fullName>
        <ecNumber evidence="1">6.1.1.11</ecNumber>
    </recommendedName>
    <alternativeName>
        <fullName evidence="1">Seryl-tRNA synthetase</fullName>
        <shortName evidence="1">SerRS</shortName>
    </alternativeName>
    <alternativeName>
        <fullName evidence="1">Seryl-tRNA(Ser/Sec) synthetase</fullName>
    </alternativeName>
</protein>
<sequence>MLDIQLLRSNTAAVAERLARRGYDFDTARFDALEERRKSVQVKTEELQASRNSISKQIGALKGQGKHEEAQVAMDQVAQIKTDLEQAAADLDAVQKELDAWLLSIPNLPHEDVPFGKDETENVEVRKVGTPREFDFEIKDHVDLGEPLGLDFEGGAKLSGARFTVMRGQIARLHRALAQFMLDTHTLKHGYTEHYTPYIVDDTTLQGTGQLPKFAEDLFHVTRGGDESKTTQYLIPTAEVTLTNTVAGSIIPSEQLPLKLTAHSPCFRSEAGSYGKDTRGLIRQHQFDKVEMVQIVHPEKSYETLEEMVGHAENILKALELPYRVITLCTGDMGFGATKTYDLEVWVPAQNTYREISSCSNCEDFQARRMKARFKDENGKNRLVHTLNGSGLAVGRTLVAVLENHQNADGSINIPAALQPYMGGVAKLEVK</sequence>
<keyword id="KW-0030">Aminoacyl-tRNA synthetase</keyword>
<keyword id="KW-0067">ATP-binding</keyword>
<keyword id="KW-0963">Cytoplasm</keyword>
<keyword id="KW-0436">Ligase</keyword>
<keyword id="KW-0547">Nucleotide-binding</keyword>
<keyword id="KW-0648">Protein biosynthesis</keyword>
<dbReference type="EC" id="6.1.1.11" evidence="1"/>
<dbReference type="EMBL" id="AL157959">
    <property type="protein sequence ID" value="CAM09055.1"/>
    <property type="molecule type" value="Genomic_DNA"/>
</dbReference>
<dbReference type="PIR" id="E81822">
    <property type="entry name" value="E81822"/>
</dbReference>
<dbReference type="RefSeq" id="WP_002246365.1">
    <property type="nucleotide sequence ID" value="NC_003116.1"/>
</dbReference>
<dbReference type="SMR" id="Q9JT77"/>
<dbReference type="EnsemblBacteria" id="CAM09055">
    <property type="protein sequence ID" value="CAM09055"/>
    <property type="gene ID" value="NMA1943"/>
</dbReference>
<dbReference type="GeneID" id="93387641"/>
<dbReference type="KEGG" id="nma:NMA1943"/>
<dbReference type="HOGENOM" id="CLU_023797_1_1_4"/>
<dbReference type="UniPathway" id="UPA00906">
    <property type="reaction ID" value="UER00895"/>
</dbReference>
<dbReference type="Proteomes" id="UP000000626">
    <property type="component" value="Chromosome"/>
</dbReference>
<dbReference type="GO" id="GO:0005737">
    <property type="term" value="C:cytoplasm"/>
    <property type="evidence" value="ECO:0007669"/>
    <property type="project" value="UniProtKB-SubCell"/>
</dbReference>
<dbReference type="GO" id="GO:0005524">
    <property type="term" value="F:ATP binding"/>
    <property type="evidence" value="ECO:0007669"/>
    <property type="project" value="UniProtKB-UniRule"/>
</dbReference>
<dbReference type="GO" id="GO:0004828">
    <property type="term" value="F:serine-tRNA ligase activity"/>
    <property type="evidence" value="ECO:0007669"/>
    <property type="project" value="UniProtKB-UniRule"/>
</dbReference>
<dbReference type="GO" id="GO:0016260">
    <property type="term" value="P:selenocysteine biosynthetic process"/>
    <property type="evidence" value="ECO:0007669"/>
    <property type="project" value="UniProtKB-UniRule"/>
</dbReference>
<dbReference type="GO" id="GO:0006434">
    <property type="term" value="P:seryl-tRNA aminoacylation"/>
    <property type="evidence" value="ECO:0007669"/>
    <property type="project" value="UniProtKB-UniRule"/>
</dbReference>
<dbReference type="CDD" id="cd00770">
    <property type="entry name" value="SerRS_core"/>
    <property type="match status" value="1"/>
</dbReference>
<dbReference type="Gene3D" id="3.30.930.10">
    <property type="entry name" value="Bira Bifunctional Protein, Domain 2"/>
    <property type="match status" value="1"/>
</dbReference>
<dbReference type="Gene3D" id="1.10.287.40">
    <property type="entry name" value="Serine-tRNA synthetase, tRNA binding domain"/>
    <property type="match status" value="1"/>
</dbReference>
<dbReference type="HAMAP" id="MF_00176">
    <property type="entry name" value="Ser_tRNA_synth_type1"/>
    <property type="match status" value="1"/>
</dbReference>
<dbReference type="InterPro" id="IPR002314">
    <property type="entry name" value="aa-tRNA-synt_IIb"/>
</dbReference>
<dbReference type="InterPro" id="IPR006195">
    <property type="entry name" value="aa-tRNA-synth_II"/>
</dbReference>
<dbReference type="InterPro" id="IPR045864">
    <property type="entry name" value="aa-tRNA-synth_II/BPL/LPL"/>
</dbReference>
<dbReference type="InterPro" id="IPR002317">
    <property type="entry name" value="Ser-tRNA-ligase_type_1"/>
</dbReference>
<dbReference type="InterPro" id="IPR015866">
    <property type="entry name" value="Ser-tRNA-synth_1_N"/>
</dbReference>
<dbReference type="InterPro" id="IPR042103">
    <property type="entry name" value="SerRS_1_N_sf"/>
</dbReference>
<dbReference type="InterPro" id="IPR033729">
    <property type="entry name" value="SerRS_core"/>
</dbReference>
<dbReference type="InterPro" id="IPR010978">
    <property type="entry name" value="tRNA-bd_arm"/>
</dbReference>
<dbReference type="NCBIfam" id="TIGR00414">
    <property type="entry name" value="serS"/>
    <property type="match status" value="1"/>
</dbReference>
<dbReference type="PANTHER" id="PTHR43697:SF1">
    <property type="entry name" value="SERINE--TRNA LIGASE"/>
    <property type="match status" value="1"/>
</dbReference>
<dbReference type="PANTHER" id="PTHR43697">
    <property type="entry name" value="SERYL-TRNA SYNTHETASE"/>
    <property type="match status" value="1"/>
</dbReference>
<dbReference type="Pfam" id="PF02403">
    <property type="entry name" value="Seryl_tRNA_N"/>
    <property type="match status" value="1"/>
</dbReference>
<dbReference type="Pfam" id="PF00587">
    <property type="entry name" value="tRNA-synt_2b"/>
    <property type="match status" value="1"/>
</dbReference>
<dbReference type="PIRSF" id="PIRSF001529">
    <property type="entry name" value="Ser-tRNA-synth_IIa"/>
    <property type="match status" value="1"/>
</dbReference>
<dbReference type="PRINTS" id="PR00981">
    <property type="entry name" value="TRNASYNTHSER"/>
</dbReference>
<dbReference type="SUPFAM" id="SSF55681">
    <property type="entry name" value="Class II aaRS and biotin synthetases"/>
    <property type="match status" value="1"/>
</dbReference>
<dbReference type="SUPFAM" id="SSF46589">
    <property type="entry name" value="tRNA-binding arm"/>
    <property type="match status" value="1"/>
</dbReference>
<dbReference type="PROSITE" id="PS50862">
    <property type="entry name" value="AA_TRNA_LIGASE_II"/>
    <property type="match status" value="1"/>
</dbReference>
<proteinExistence type="inferred from homology"/>
<evidence type="ECO:0000255" key="1">
    <source>
        <dbReference type="HAMAP-Rule" id="MF_00176"/>
    </source>
</evidence>
<reference key="1">
    <citation type="journal article" date="2000" name="Nature">
        <title>Complete DNA sequence of a serogroup A strain of Neisseria meningitidis Z2491.</title>
        <authorList>
            <person name="Parkhill J."/>
            <person name="Achtman M."/>
            <person name="James K.D."/>
            <person name="Bentley S.D."/>
            <person name="Churcher C.M."/>
            <person name="Klee S.R."/>
            <person name="Morelli G."/>
            <person name="Basham D."/>
            <person name="Brown D."/>
            <person name="Chillingworth T."/>
            <person name="Davies R.M."/>
            <person name="Davis P."/>
            <person name="Devlin K."/>
            <person name="Feltwell T."/>
            <person name="Hamlin N."/>
            <person name="Holroyd S."/>
            <person name="Jagels K."/>
            <person name="Leather S."/>
            <person name="Moule S."/>
            <person name="Mungall K.L."/>
            <person name="Quail M.A."/>
            <person name="Rajandream M.A."/>
            <person name="Rutherford K.M."/>
            <person name="Simmonds M."/>
            <person name="Skelton J."/>
            <person name="Whitehead S."/>
            <person name="Spratt B.G."/>
            <person name="Barrell B.G."/>
        </authorList>
    </citation>
    <scope>NUCLEOTIDE SEQUENCE [LARGE SCALE GENOMIC DNA]</scope>
    <source>
        <strain>DSM 15465 / Z2491</strain>
    </source>
</reference>
<organism>
    <name type="scientific">Neisseria meningitidis serogroup A / serotype 4A (strain DSM 15465 / Z2491)</name>
    <dbReference type="NCBI Taxonomy" id="122587"/>
    <lineage>
        <taxon>Bacteria</taxon>
        <taxon>Pseudomonadati</taxon>
        <taxon>Pseudomonadota</taxon>
        <taxon>Betaproteobacteria</taxon>
        <taxon>Neisseriales</taxon>
        <taxon>Neisseriaceae</taxon>
        <taxon>Neisseria</taxon>
    </lineage>
</organism>
<feature type="chain" id="PRO_0000122089" description="Serine--tRNA ligase">
    <location>
        <begin position="1"/>
        <end position="431"/>
    </location>
</feature>
<feature type="binding site" evidence="1">
    <location>
        <begin position="237"/>
        <end position="239"/>
    </location>
    <ligand>
        <name>L-serine</name>
        <dbReference type="ChEBI" id="CHEBI:33384"/>
    </ligand>
</feature>
<feature type="binding site" evidence="1">
    <location>
        <begin position="268"/>
        <end position="270"/>
    </location>
    <ligand>
        <name>ATP</name>
        <dbReference type="ChEBI" id="CHEBI:30616"/>
    </ligand>
</feature>
<feature type="binding site" evidence="1">
    <location>
        <position position="291"/>
    </location>
    <ligand>
        <name>L-serine</name>
        <dbReference type="ChEBI" id="CHEBI:33384"/>
    </ligand>
</feature>
<feature type="binding site" evidence="1">
    <location>
        <begin position="355"/>
        <end position="358"/>
    </location>
    <ligand>
        <name>ATP</name>
        <dbReference type="ChEBI" id="CHEBI:30616"/>
    </ligand>
</feature>
<feature type="binding site" evidence="1">
    <location>
        <position position="390"/>
    </location>
    <ligand>
        <name>L-serine</name>
        <dbReference type="ChEBI" id="CHEBI:33384"/>
    </ligand>
</feature>
<gene>
    <name evidence="1" type="primary">serS</name>
    <name type="ordered locus">NMA1943</name>
</gene>
<accession>Q9JT77</accession>
<accession>A1ITE1</accession>
<comment type="function">
    <text evidence="1">Catalyzes the attachment of serine to tRNA(Ser). Is also able to aminoacylate tRNA(Sec) with serine, to form the misacylated tRNA L-seryl-tRNA(Sec), which will be further converted into selenocysteinyl-tRNA(Sec).</text>
</comment>
<comment type="catalytic activity">
    <reaction evidence="1">
        <text>tRNA(Ser) + L-serine + ATP = L-seryl-tRNA(Ser) + AMP + diphosphate + H(+)</text>
        <dbReference type="Rhea" id="RHEA:12292"/>
        <dbReference type="Rhea" id="RHEA-COMP:9669"/>
        <dbReference type="Rhea" id="RHEA-COMP:9703"/>
        <dbReference type="ChEBI" id="CHEBI:15378"/>
        <dbReference type="ChEBI" id="CHEBI:30616"/>
        <dbReference type="ChEBI" id="CHEBI:33019"/>
        <dbReference type="ChEBI" id="CHEBI:33384"/>
        <dbReference type="ChEBI" id="CHEBI:78442"/>
        <dbReference type="ChEBI" id="CHEBI:78533"/>
        <dbReference type="ChEBI" id="CHEBI:456215"/>
        <dbReference type="EC" id="6.1.1.11"/>
    </reaction>
</comment>
<comment type="catalytic activity">
    <reaction evidence="1">
        <text>tRNA(Sec) + L-serine + ATP = L-seryl-tRNA(Sec) + AMP + diphosphate + H(+)</text>
        <dbReference type="Rhea" id="RHEA:42580"/>
        <dbReference type="Rhea" id="RHEA-COMP:9742"/>
        <dbReference type="Rhea" id="RHEA-COMP:10128"/>
        <dbReference type="ChEBI" id="CHEBI:15378"/>
        <dbReference type="ChEBI" id="CHEBI:30616"/>
        <dbReference type="ChEBI" id="CHEBI:33019"/>
        <dbReference type="ChEBI" id="CHEBI:33384"/>
        <dbReference type="ChEBI" id="CHEBI:78442"/>
        <dbReference type="ChEBI" id="CHEBI:78533"/>
        <dbReference type="ChEBI" id="CHEBI:456215"/>
        <dbReference type="EC" id="6.1.1.11"/>
    </reaction>
</comment>
<comment type="pathway">
    <text evidence="1">Aminoacyl-tRNA biosynthesis; selenocysteinyl-tRNA(Sec) biosynthesis; L-seryl-tRNA(Sec) from L-serine and tRNA(Sec): step 1/1.</text>
</comment>
<comment type="subunit">
    <text evidence="1">Homodimer. The tRNA molecule binds across the dimer.</text>
</comment>
<comment type="subcellular location">
    <subcellularLocation>
        <location evidence="1">Cytoplasm</location>
    </subcellularLocation>
</comment>
<comment type="domain">
    <text evidence="1">Consists of two distinct domains, a catalytic core and a N-terminal extension that is involved in tRNA binding.</text>
</comment>
<comment type="similarity">
    <text evidence="1">Belongs to the class-II aminoacyl-tRNA synthetase family. Type-1 seryl-tRNA synthetase subfamily.</text>
</comment>
<name>SYS_NEIMA</name>